<feature type="signal peptide" evidence="2">
    <location>
        <begin position="1"/>
        <end position="19"/>
    </location>
</feature>
<feature type="propeptide" id="PRO_0000006829" evidence="1">
    <location>
        <begin position="20"/>
        <end position="58"/>
    </location>
</feature>
<feature type="peptide" id="PRO_0000006830" description="Alpha-defensin 7">
    <location>
        <begin position="59"/>
        <end position="93"/>
    </location>
</feature>
<feature type="region of interest" description="Disordered" evidence="3">
    <location>
        <begin position="22"/>
        <end position="56"/>
    </location>
</feature>
<feature type="disulfide bond" evidence="1">
    <location>
        <begin position="64"/>
        <end position="92"/>
    </location>
</feature>
<feature type="disulfide bond" evidence="1">
    <location>
        <begin position="66"/>
        <end position="81"/>
    </location>
</feature>
<feature type="disulfide bond" evidence="1">
    <location>
        <begin position="71"/>
        <end position="91"/>
    </location>
</feature>
<protein>
    <recommendedName>
        <fullName>Alpha-defensin 7</fullName>
    </recommendedName>
    <alternativeName>
        <fullName>Defensin-related cryptdin-7</fullName>
    </alternativeName>
</protein>
<comment type="function">
    <text>Probably contributes to the antimicrobial barrier function of the small bowel mucosa.</text>
</comment>
<comment type="subcellular location">
    <subcellularLocation>
        <location>Secreted</location>
    </subcellularLocation>
</comment>
<comment type="tissue specificity">
    <text>Paneth cells of the small bowel.</text>
</comment>
<comment type="similarity">
    <text evidence="4">Belongs to the alpha-defensin family.</text>
</comment>
<gene>
    <name type="primary">Defa7</name>
    <name type="synonym">Defcr7</name>
</gene>
<keyword id="KW-0044">Antibiotic</keyword>
<keyword id="KW-0929">Antimicrobial</keyword>
<keyword id="KW-0211">Defensin</keyword>
<keyword id="KW-1015">Disulfide bond</keyword>
<keyword id="KW-1185">Reference proteome</keyword>
<keyword id="KW-0964">Secreted</keyword>
<keyword id="KW-0732">Signal</keyword>
<reference key="1">
    <citation type="journal article" date="1994" name="Infect. Immun.">
        <title>Mouse Paneth cell defensins: primary structures and antibacterial activities of numerous cryptdin isoforms.</title>
        <authorList>
            <person name="Ouellette A.J."/>
            <person name="Hsieh M.M."/>
            <person name="Nosek M.T."/>
            <person name="Cano-Gauci D.F."/>
            <person name="Huttner K.M."/>
            <person name="Buick R.N."/>
            <person name="Selsted M.E."/>
        </authorList>
    </citation>
    <scope>NUCLEOTIDE SEQUENCE [MRNA]</scope>
    <source>
        <strain>CD-1</strain>
        <tissue>Intestinal crypt</tissue>
    </source>
</reference>
<reference key="2">
    <citation type="journal article" date="1994" name="Genomics">
        <title>Structure and diversity of the murine cryptdin gene family.</title>
        <authorList>
            <person name="Huttner K.M."/>
            <person name="Selsted M.E."/>
            <person name="Ouellette A.J."/>
        </authorList>
    </citation>
    <scope>NUCLEOTIDE SEQUENCE [MRNA] OF 59-93</scope>
    <source>
        <strain>129/SvJ</strain>
        <strain>C3H/HeJ</strain>
        <tissue>Small intestine</tissue>
    </source>
</reference>
<sequence>MKTLILLSALVLLAFQVQADPIQNTDEETKTEEQPGEDDQAVSVSFGDPEGSSLQEESLRDLVCYCRTRGCKRREHMNGTCRKGHLMYTLCCR</sequence>
<organism>
    <name type="scientific">Mus musculus</name>
    <name type="common">Mouse</name>
    <dbReference type="NCBI Taxonomy" id="10090"/>
    <lineage>
        <taxon>Eukaryota</taxon>
        <taxon>Metazoa</taxon>
        <taxon>Chordata</taxon>
        <taxon>Craniata</taxon>
        <taxon>Vertebrata</taxon>
        <taxon>Euteleostomi</taxon>
        <taxon>Mammalia</taxon>
        <taxon>Eutheria</taxon>
        <taxon>Euarchontoglires</taxon>
        <taxon>Glires</taxon>
        <taxon>Rodentia</taxon>
        <taxon>Myomorpha</taxon>
        <taxon>Muroidea</taxon>
        <taxon>Muridae</taxon>
        <taxon>Murinae</taxon>
        <taxon>Mus</taxon>
        <taxon>Mus</taxon>
    </lineage>
</organism>
<name>DEFA7_MOUSE</name>
<evidence type="ECO:0000250" key="1"/>
<evidence type="ECO:0000255" key="2"/>
<evidence type="ECO:0000256" key="3">
    <source>
        <dbReference type="SAM" id="MobiDB-lite"/>
    </source>
</evidence>
<evidence type="ECO:0000305" key="4"/>
<dbReference type="EMBL" id="U03035">
    <property type="protein sequence ID" value="AAA57175.1"/>
    <property type="molecule type" value="mRNA"/>
</dbReference>
<dbReference type="PIR" id="I48890">
    <property type="entry name" value="I48890"/>
</dbReference>
<dbReference type="SMR" id="P50705"/>
<dbReference type="FunCoup" id="P50705">
    <property type="interactions" value="42"/>
</dbReference>
<dbReference type="AGR" id="MGI:99581"/>
<dbReference type="MGI" id="MGI:99581">
    <property type="gene designation" value="Defa7"/>
</dbReference>
<dbReference type="InParanoid" id="P50705"/>
<dbReference type="PRO" id="PR:P50705"/>
<dbReference type="Proteomes" id="UP000000589">
    <property type="component" value="Unplaced"/>
</dbReference>
<dbReference type="RNAct" id="P50705">
    <property type="molecule type" value="protein"/>
</dbReference>
<dbReference type="GO" id="GO:0005615">
    <property type="term" value="C:extracellular space"/>
    <property type="evidence" value="ECO:0007669"/>
    <property type="project" value="InterPro"/>
</dbReference>
<dbReference type="GO" id="GO:0042742">
    <property type="term" value="P:defense response to bacterium"/>
    <property type="evidence" value="ECO:0007669"/>
    <property type="project" value="UniProtKB-KW"/>
</dbReference>
<dbReference type="InterPro" id="IPR016327">
    <property type="entry name" value="Alpha-defensin"/>
</dbReference>
<dbReference type="InterPro" id="IPR006081">
    <property type="entry name" value="Alpha-defensin_C"/>
</dbReference>
<dbReference type="InterPro" id="IPR002366">
    <property type="entry name" value="Alpha-defensin_N"/>
</dbReference>
<dbReference type="InterPro" id="IPR006080">
    <property type="entry name" value="Beta/alpha-defensin_C"/>
</dbReference>
<dbReference type="PANTHER" id="PTHR11876">
    <property type="entry name" value="ALPHA-DEFENSIN 1"/>
    <property type="match status" value="1"/>
</dbReference>
<dbReference type="PANTHER" id="PTHR11876:SF2">
    <property type="entry name" value="ALPHA-DEFENSIN 1-RELATED"/>
    <property type="match status" value="1"/>
</dbReference>
<dbReference type="Pfam" id="PF00323">
    <property type="entry name" value="Defensin_1"/>
    <property type="match status" value="1"/>
</dbReference>
<dbReference type="Pfam" id="PF00879">
    <property type="entry name" value="Defensin_propep"/>
    <property type="match status" value="1"/>
</dbReference>
<dbReference type="PIRSF" id="PIRSF001875">
    <property type="entry name" value="Alpha-defensin"/>
    <property type="match status" value="1"/>
</dbReference>
<dbReference type="SMART" id="SM01418">
    <property type="entry name" value="Defensin_propep"/>
    <property type="match status" value="1"/>
</dbReference>
<dbReference type="SMART" id="SM00048">
    <property type="entry name" value="DEFSN"/>
    <property type="match status" value="1"/>
</dbReference>
<dbReference type="SUPFAM" id="SSF57392">
    <property type="entry name" value="Defensin-like"/>
    <property type="match status" value="1"/>
</dbReference>
<dbReference type="PROSITE" id="PS00269">
    <property type="entry name" value="DEFENSIN"/>
    <property type="match status" value="1"/>
</dbReference>
<accession>P50705</accession>
<proteinExistence type="evidence at transcript level"/>